<accession>B7M586</accession>
<sequence>MLNNAMSVVILAAGKGTRMYSDLPKVLHTLAGKAMVQHVIDAANELGAAHVHLVYGHGGDLLKQALKDDNLNWVLQAEQLGTGHAMQQAAPFFADDEDILMLYGDVPLISVETLQRLRDAKPQGGIGLLTVKLDDPTGYGRITRENGKVTGIVEHKDATDEQRQIQEINTGILIANGADMKRWLAKLTNNNAQGEYYITDIIALAYQEGREIVAVHPQRLSEVEGVNNRLQLSRLERVYQSEQAEKLLLAGVMLRDPARFDLRGTLAHGRDIEIDTNVIIEGNVTLGHRVKIGTGCVIKNSVIGDDCEISPYTIVEDANLAAACTIGPFARLRPGAELLEGAHVGNFVEMKKARLGKGSKAGHLTYLGDAEIGDNVNIGAGTITCNYDGANKFKTIIGDDVFVGSDTQLVAPVTVGKGATIAAGTTVTRNVGENALAISRVPQTQKEGWRRPVKKK</sequence>
<comment type="function">
    <text evidence="1">Catalyzes the last two sequential reactions in the de novo biosynthetic pathway for UDP-N-acetylglucosamine (UDP-GlcNAc). The C-terminal domain catalyzes the transfer of acetyl group from acetyl coenzyme A to glucosamine-1-phosphate (GlcN-1-P) to produce N-acetylglucosamine-1-phosphate (GlcNAc-1-P), which is converted into UDP-GlcNAc by the transfer of uridine 5-monophosphate (from uridine 5-triphosphate), a reaction catalyzed by the N-terminal domain.</text>
</comment>
<comment type="catalytic activity">
    <reaction evidence="1">
        <text>alpha-D-glucosamine 1-phosphate + acetyl-CoA = N-acetyl-alpha-D-glucosamine 1-phosphate + CoA + H(+)</text>
        <dbReference type="Rhea" id="RHEA:13725"/>
        <dbReference type="ChEBI" id="CHEBI:15378"/>
        <dbReference type="ChEBI" id="CHEBI:57287"/>
        <dbReference type="ChEBI" id="CHEBI:57288"/>
        <dbReference type="ChEBI" id="CHEBI:57776"/>
        <dbReference type="ChEBI" id="CHEBI:58516"/>
        <dbReference type="EC" id="2.3.1.157"/>
    </reaction>
</comment>
<comment type="catalytic activity">
    <reaction evidence="1">
        <text>N-acetyl-alpha-D-glucosamine 1-phosphate + UTP + H(+) = UDP-N-acetyl-alpha-D-glucosamine + diphosphate</text>
        <dbReference type="Rhea" id="RHEA:13509"/>
        <dbReference type="ChEBI" id="CHEBI:15378"/>
        <dbReference type="ChEBI" id="CHEBI:33019"/>
        <dbReference type="ChEBI" id="CHEBI:46398"/>
        <dbReference type="ChEBI" id="CHEBI:57705"/>
        <dbReference type="ChEBI" id="CHEBI:57776"/>
        <dbReference type="EC" id="2.7.7.23"/>
    </reaction>
</comment>
<comment type="cofactor">
    <cofactor evidence="1">
        <name>Mg(2+)</name>
        <dbReference type="ChEBI" id="CHEBI:18420"/>
    </cofactor>
    <text evidence="1">Binds 1 Mg(2+) ion per subunit.</text>
</comment>
<comment type="pathway">
    <text evidence="1">Nucleotide-sugar biosynthesis; UDP-N-acetyl-alpha-D-glucosamine biosynthesis; N-acetyl-alpha-D-glucosamine 1-phosphate from alpha-D-glucosamine 6-phosphate (route II): step 2/2.</text>
</comment>
<comment type="pathway">
    <text evidence="1">Nucleotide-sugar biosynthesis; UDP-N-acetyl-alpha-D-glucosamine biosynthesis; UDP-N-acetyl-alpha-D-glucosamine from N-acetyl-alpha-D-glucosamine 1-phosphate: step 1/1.</text>
</comment>
<comment type="pathway">
    <text evidence="1">Bacterial outer membrane biogenesis; LPS lipid A biosynthesis.</text>
</comment>
<comment type="subunit">
    <text evidence="1">Homotrimer.</text>
</comment>
<comment type="subcellular location">
    <subcellularLocation>
        <location evidence="1">Cytoplasm</location>
    </subcellularLocation>
</comment>
<comment type="similarity">
    <text evidence="1">In the N-terminal section; belongs to the N-acetylglucosamine-1-phosphate uridyltransferase family.</text>
</comment>
<comment type="similarity">
    <text evidence="1">In the C-terminal section; belongs to the transferase hexapeptide repeat family.</text>
</comment>
<organism>
    <name type="scientific">Escherichia coli O8 (strain IAI1)</name>
    <dbReference type="NCBI Taxonomy" id="585034"/>
    <lineage>
        <taxon>Bacteria</taxon>
        <taxon>Pseudomonadati</taxon>
        <taxon>Pseudomonadota</taxon>
        <taxon>Gammaproteobacteria</taxon>
        <taxon>Enterobacterales</taxon>
        <taxon>Enterobacteriaceae</taxon>
        <taxon>Escherichia</taxon>
    </lineage>
</organism>
<name>GLMU_ECO8A</name>
<dbReference type="EC" id="2.7.7.23" evidence="1"/>
<dbReference type="EC" id="2.3.1.157" evidence="1"/>
<dbReference type="EMBL" id="CU928160">
    <property type="protein sequence ID" value="CAR00708.1"/>
    <property type="molecule type" value="Genomic_DNA"/>
</dbReference>
<dbReference type="RefSeq" id="WP_000933726.1">
    <property type="nucleotide sequence ID" value="NC_011741.1"/>
</dbReference>
<dbReference type="SMR" id="B7M586"/>
<dbReference type="KEGG" id="ecr:ECIAI1_3914"/>
<dbReference type="HOGENOM" id="CLU_029499_15_2_6"/>
<dbReference type="UniPathway" id="UPA00113">
    <property type="reaction ID" value="UER00532"/>
</dbReference>
<dbReference type="UniPathway" id="UPA00113">
    <property type="reaction ID" value="UER00533"/>
</dbReference>
<dbReference type="UniPathway" id="UPA00973"/>
<dbReference type="GO" id="GO:0005737">
    <property type="term" value="C:cytoplasm"/>
    <property type="evidence" value="ECO:0007669"/>
    <property type="project" value="UniProtKB-SubCell"/>
</dbReference>
<dbReference type="GO" id="GO:0016020">
    <property type="term" value="C:membrane"/>
    <property type="evidence" value="ECO:0007669"/>
    <property type="project" value="GOC"/>
</dbReference>
<dbReference type="GO" id="GO:0019134">
    <property type="term" value="F:glucosamine-1-phosphate N-acetyltransferase activity"/>
    <property type="evidence" value="ECO:0007669"/>
    <property type="project" value="UniProtKB-UniRule"/>
</dbReference>
<dbReference type="GO" id="GO:0000287">
    <property type="term" value="F:magnesium ion binding"/>
    <property type="evidence" value="ECO:0007669"/>
    <property type="project" value="UniProtKB-UniRule"/>
</dbReference>
<dbReference type="GO" id="GO:0003977">
    <property type="term" value="F:UDP-N-acetylglucosamine diphosphorylase activity"/>
    <property type="evidence" value="ECO:0007669"/>
    <property type="project" value="UniProtKB-UniRule"/>
</dbReference>
<dbReference type="GO" id="GO:0000902">
    <property type="term" value="P:cell morphogenesis"/>
    <property type="evidence" value="ECO:0007669"/>
    <property type="project" value="UniProtKB-UniRule"/>
</dbReference>
<dbReference type="GO" id="GO:0071555">
    <property type="term" value="P:cell wall organization"/>
    <property type="evidence" value="ECO:0007669"/>
    <property type="project" value="UniProtKB-KW"/>
</dbReference>
<dbReference type="GO" id="GO:0009245">
    <property type="term" value="P:lipid A biosynthetic process"/>
    <property type="evidence" value="ECO:0007669"/>
    <property type="project" value="UniProtKB-UniRule"/>
</dbReference>
<dbReference type="GO" id="GO:0009252">
    <property type="term" value="P:peptidoglycan biosynthetic process"/>
    <property type="evidence" value="ECO:0007669"/>
    <property type="project" value="UniProtKB-UniRule"/>
</dbReference>
<dbReference type="GO" id="GO:0008360">
    <property type="term" value="P:regulation of cell shape"/>
    <property type="evidence" value="ECO:0007669"/>
    <property type="project" value="UniProtKB-KW"/>
</dbReference>
<dbReference type="GO" id="GO:0006048">
    <property type="term" value="P:UDP-N-acetylglucosamine biosynthetic process"/>
    <property type="evidence" value="ECO:0007669"/>
    <property type="project" value="UniProtKB-UniPathway"/>
</dbReference>
<dbReference type="CDD" id="cd02540">
    <property type="entry name" value="GT2_GlmU_N_bac"/>
    <property type="match status" value="1"/>
</dbReference>
<dbReference type="CDD" id="cd03353">
    <property type="entry name" value="LbH_GlmU_C"/>
    <property type="match status" value="1"/>
</dbReference>
<dbReference type="FunFam" id="2.160.10.10:FF:000011">
    <property type="entry name" value="Bifunctional protein GlmU"/>
    <property type="match status" value="1"/>
</dbReference>
<dbReference type="FunFam" id="3.90.550.10:FF:000006">
    <property type="entry name" value="Bifunctional protein GlmU"/>
    <property type="match status" value="1"/>
</dbReference>
<dbReference type="Gene3D" id="2.160.10.10">
    <property type="entry name" value="Hexapeptide repeat proteins"/>
    <property type="match status" value="1"/>
</dbReference>
<dbReference type="Gene3D" id="3.90.550.10">
    <property type="entry name" value="Spore Coat Polysaccharide Biosynthesis Protein SpsA, Chain A"/>
    <property type="match status" value="1"/>
</dbReference>
<dbReference type="HAMAP" id="MF_01631">
    <property type="entry name" value="GlmU"/>
    <property type="match status" value="1"/>
</dbReference>
<dbReference type="InterPro" id="IPR005882">
    <property type="entry name" value="Bifunctional_GlmU"/>
</dbReference>
<dbReference type="InterPro" id="IPR050065">
    <property type="entry name" value="GlmU-like"/>
</dbReference>
<dbReference type="InterPro" id="IPR038009">
    <property type="entry name" value="GlmU_C_LbH"/>
</dbReference>
<dbReference type="InterPro" id="IPR001451">
    <property type="entry name" value="Hexapep"/>
</dbReference>
<dbReference type="InterPro" id="IPR018357">
    <property type="entry name" value="Hexapep_transf_CS"/>
</dbReference>
<dbReference type="InterPro" id="IPR025877">
    <property type="entry name" value="MobA-like_NTP_Trfase"/>
</dbReference>
<dbReference type="InterPro" id="IPR029044">
    <property type="entry name" value="Nucleotide-diphossugar_trans"/>
</dbReference>
<dbReference type="InterPro" id="IPR011004">
    <property type="entry name" value="Trimer_LpxA-like_sf"/>
</dbReference>
<dbReference type="NCBIfam" id="TIGR01173">
    <property type="entry name" value="glmU"/>
    <property type="match status" value="1"/>
</dbReference>
<dbReference type="NCBIfam" id="NF006986">
    <property type="entry name" value="PRK09451.1"/>
    <property type="match status" value="1"/>
</dbReference>
<dbReference type="PANTHER" id="PTHR43584:SF3">
    <property type="entry name" value="BIFUNCTIONAL PROTEIN GLMU"/>
    <property type="match status" value="1"/>
</dbReference>
<dbReference type="PANTHER" id="PTHR43584">
    <property type="entry name" value="NUCLEOTIDYL TRANSFERASE"/>
    <property type="match status" value="1"/>
</dbReference>
<dbReference type="Pfam" id="PF00132">
    <property type="entry name" value="Hexapep"/>
    <property type="match status" value="1"/>
</dbReference>
<dbReference type="Pfam" id="PF12804">
    <property type="entry name" value="NTP_transf_3"/>
    <property type="match status" value="1"/>
</dbReference>
<dbReference type="SUPFAM" id="SSF53448">
    <property type="entry name" value="Nucleotide-diphospho-sugar transferases"/>
    <property type="match status" value="1"/>
</dbReference>
<dbReference type="SUPFAM" id="SSF51161">
    <property type="entry name" value="Trimeric LpxA-like enzymes"/>
    <property type="match status" value="1"/>
</dbReference>
<dbReference type="PROSITE" id="PS00101">
    <property type="entry name" value="HEXAPEP_TRANSFERASES"/>
    <property type="match status" value="1"/>
</dbReference>
<keyword id="KW-0012">Acyltransferase</keyword>
<keyword id="KW-0133">Cell shape</keyword>
<keyword id="KW-0961">Cell wall biogenesis/degradation</keyword>
<keyword id="KW-0963">Cytoplasm</keyword>
<keyword id="KW-0460">Magnesium</keyword>
<keyword id="KW-0479">Metal-binding</keyword>
<keyword id="KW-0511">Multifunctional enzyme</keyword>
<keyword id="KW-0548">Nucleotidyltransferase</keyword>
<keyword id="KW-0573">Peptidoglycan synthesis</keyword>
<keyword id="KW-0677">Repeat</keyword>
<keyword id="KW-0808">Transferase</keyword>
<reference key="1">
    <citation type="journal article" date="2009" name="PLoS Genet.">
        <title>Organised genome dynamics in the Escherichia coli species results in highly diverse adaptive paths.</title>
        <authorList>
            <person name="Touchon M."/>
            <person name="Hoede C."/>
            <person name="Tenaillon O."/>
            <person name="Barbe V."/>
            <person name="Baeriswyl S."/>
            <person name="Bidet P."/>
            <person name="Bingen E."/>
            <person name="Bonacorsi S."/>
            <person name="Bouchier C."/>
            <person name="Bouvet O."/>
            <person name="Calteau A."/>
            <person name="Chiapello H."/>
            <person name="Clermont O."/>
            <person name="Cruveiller S."/>
            <person name="Danchin A."/>
            <person name="Diard M."/>
            <person name="Dossat C."/>
            <person name="Karoui M.E."/>
            <person name="Frapy E."/>
            <person name="Garry L."/>
            <person name="Ghigo J.M."/>
            <person name="Gilles A.M."/>
            <person name="Johnson J."/>
            <person name="Le Bouguenec C."/>
            <person name="Lescat M."/>
            <person name="Mangenot S."/>
            <person name="Martinez-Jehanne V."/>
            <person name="Matic I."/>
            <person name="Nassif X."/>
            <person name="Oztas S."/>
            <person name="Petit M.A."/>
            <person name="Pichon C."/>
            <person name="Rouy Z."/>
            <person name="Ruf C.S."/>
            <person name="Schneider D."/>
            <person name="Tourret J."/>
            <person name="Vacherie B."/>
            <person name="Vallenet D."/>
            <person name="Medigue C."/>
            <person name="Rocha E.P.C."/>
            <person name="Denamur E."/>
        </authorList>
    </citation>
    <scope>NUCLEOTIDE SEQUENCE [LARGE SCALE GENOMIC DNA]</scope>
    <source>
        <strain>IAI1</strain>
    </source>
</reference>
<gene>
    <name evidence="1" type="primary">glmU</name>
    <name type="ordered locus">ECIAI1_3914</name>
</gene>
<proteinExistence type="inferred from homology"/>
<protein>
    <recommendedName>
        <fullName evidence="1">Bifunctional protein GlmU</fullName>
    </recommendedName>
    <domain>
        <recommendedName>
            <fullName evidence="1">UDP-N-acetylglucosamine pyrophosphorylase</fullName>
            <ecNumber evidence="1">2.7.7.23</ecNumber>
        </recommendedName>
        <alternativeName>
            <fullName evidence="1">N-acetylglucosamine-1-phosphate uridyltransferase</fullName>
        </alternativeName>
    </domain>
    <domain>
        <recommendedName>
            <fullName evidence="1">Glucosamine-1-phosphate N-acetyltransferase</fullName>
            <ecNumber evidence="1">2.3.1.157</ecNumber>
        </recommendedName>
    </domain>
</protein>
<feature type="chain" id="PRO_1000186447" description="Bifunctional protein GlmU">
    <location>
        <begin position="1"/>
        <end position="456"/>
    </location>
</feature>
<feature type="region of interest" description="Pyrophosphorylase" evidence="1">
    <location>
        <begin position="1"/>
        <end position="229"/>
    </location>
</feature>
<feature type="region of interest" description="Linker" evidence="1">
    <location>
        <begin position="230"/>
        <end position="250"/>
    </location>
</feature>
<feature type="region of interest" description="N-acetyltransferase" evidence="1">
    <location>
        <begin position="251"/>
        <end position="456"/>
    </location>
</feature>
<feature type="active site" description="Proton acceptor" evidence="1">
    <location>
        <position position="363"/>
    </location>
</feature>
<feature type="binding site" evidence="1">
    <location>
        <begin position="11"/>
        <end position="14"/>
    </location>
    <ligand>
        <name>UDP-N-acetyl-alpha-D-glucosamine</name>
        <dbReference type="ChEBI" id="CHEBI:57705"/>
    </ligand>
</feature>
<feature type="binding site" evidence="1">
    <location>
        <position position="25"/>
    </location>
    <ligand>
        <name>UDP-N-acetyl-alpha-D-glucosamine</name>
        <dbReference type="ChEBI" id="CHEBI:57705"/>
    </ligand>
</feature>
<feature type="binding site" evidence="1">
    <location>
        <position position="76"/>
    </location>
    <ligand>
        <name>UDP-N-acetyl-alpha-D-glucosamine</name>
        <dbReference type="ChEBI" id="CHEBI:57705"/>
    </ligand>
</feature>
<feature type="binding site" evidence="1">
    <location>
        <begin position="81"/>
        <end position="82"/>
    </location>
    <ligand>
        <name>UDP-N-acetyl-alpha-D-glucosamine</name>
        <dbReference type="ChEBI" id="CHEBI:57705"/>
    </ligand>
</feature>
<feature type="binding site" evidence="1">
    <location>
        <begin position="103"/>
        <end position="105"/>
    </location>
    <ligand>
        <name>UDP-N-acetyl-alpha-D-glucosamine</name>
        <dbReference type="ChEBI" id="CHEBI:57705"/>
    </ligand>
</feature>
<feature type="binding site" evidence="1">
    <location>
        <position position="105"/>
    </location>
    <ligand>
        <name>Mg(2+)</name>
        <dbReference type="ChEBI" id="CHEBI:18420"/>
    </ligand>
</feature>
<feature type="binding site" evidence="1">
    <location>
        <position position="140"/>
    </location>
    <ligand>
        <name>UDP-N-acetyl-alpha-D-glucosamine</name>
        <dbReference type="ChEBI" id="CHEBI:57705"/>
    </ligand>
</feature>
<feature type="binding site" evidence="1">
    <location>
        <position position="154"/>
    </location>
    <ligand>
        <name>UDP-N-acetyl-alpha-D-glucosamine</name>
        <dbReference type="ChEBI" id="CHEBI:57705"/>
    </ligand>
</feature>
<feature type="binding site" evidence="1">
    <location>
        <position position="169"/>
    </location>
    <ligand>
        <name>UDP-N-acetyl-alpha-D-glucosamine</name>
        <dbReference type="ChEBI" id="CHEBI:57705"/>
    </ligand>
</feature>
<feature type="binding site" evidence="1">
    <location>
        <position position="227"/>
    </location>
    <ligand>
        <name>Mg(2+)</name>
        <dbReference type="ChEBI" id="CHEBI:18420"/>
    </ligand>
</feature>
<feature type="binding site" evidence="1">
    <location>
        <position position="227"/>
    </location>
    <ligand>
        <name>UDP-N-acetyl-alpha-D-glucosamine</name>
        <dbReference type="ChEBI" id="CHEBI:57705"/>
    </ligand>
</feature>
<feature type="binding site" evidence="1">
    <location>
        <position position="333"/>
    </location>
    <ligand>
        <name>UDP-N-acetyl-alpha-D-glucosamine</name>
        <dbReference type="ChEBI" id="CHEBI:57705"/>
    </ligand>
</feature>
<feature type="binding site" evidence="1">
    <location>
        <position position="351"/>
    </location>
    <ligand>
        <name>UDP-N-acetyl-alpha-D-glucosamine</name>
        <dbReference type="ChEBI" id="CHEBI:57705"/>
    </ligand>
</feature>
<feature type="binding site" evidence="1">
    <location>
        <position position="366"/>
    </location>
    <ligand>
        <name>UDP-N-acetyl-alpha-D-glucosamine</name>
        <dbReference type="ChEBI" id="CHEBI:57705"/>
    </ligand>
</feature>
<feature type="binding site" evidence="1">
    <location>
        <position position="377"/>
    </location>
    <ligand>
        <name>UDP-N-acetyl-alpha-D-glucosamine</name>
        <dbReference type="ChEBI" id="CHEBI:57705"/>
    </ligand>
</feature>
<feature type="binding site" evidence="1">
    <location>
        <position position="380"/>
    </location>
    <ligand>
        <name>acetyl-CoA</name>
        <dbReference type="ChEBI" id="CHEBI:57288"/>
    </ligand>
</feature>
<feature type="binding site" evidence="1">
    <location>
        <begin position="386"/>
        <end position="387"/>
    </location>
    <ligand>
        <name>acetyl-CoA</name>
        <dbReference type="ChEBI" id="CHEBI:57288"/>
    </ligand>
</feature>
<feature type="binding site" evidence="1">
    <location>
        <position position="405"/>
    </location>
    <ligand>
        <name>acetyl-CoA</name>
        <dbReference type="ChEBI" id="CHEBI:57288"/>
    </ligand>
</feature>
<feature type="binding site" evidence="1">
    <location>
        <position position="423"/>
    </location>
    <ligand>
        <name>acetyl-CoA</name>
        <dbReference type="ChEBI" id="CHEBI:57288"/>
    </ligand>
</feature>
<feature type="binding site" evidence="1">
    <location>
        <position position="440"/>
    </location>
    <ligand>
        <name>acetyl-CoA</name>
        <dbReference type="ChEBI" id="CHEBI:57288"/>
    </ligand>
</feature>
<evidence type="ECO:0000255" key="1">
    <source>
        <dbReference type="HAMAP-Rule" id="MF_01631"/>
    </source>
</evidence>